<organism>
    <name type="scientific">Neisseria meningitidis serogroup B (strain ATCC BAA-335 / MC58)</name>
    <dbReference type="NCBI Taxonomy" id="122586"/>
    <lineage>
        <taxon>Bacteria</taxon>
        <taxon>Pseudomonadati</taxon>
        <taxon>Pseudomonadota</taxon>
        <taxon>Betaproteobacteria</taxon>
        <taxon>Neisseriales</taxon>
        <taxon>Neisseriaceae</taxon>
        <taxon>Neisseria</taxon>
    </lineage>
</organism>
<protein>
    <recommendedName>
        <fullName evidence="1">Threonylcarbamoyl-AMP synthase</fullName>
        <shortName evidence="1">TC-AMP synthase</shortName>
        <ecNumber evidence="1">2.7.7.87</ecNumber>
    </recommendedName>
    <alternativeName>
        <fullName evidence="1">L-threonylcarbamoyladenylate synthase</fullName>
    </alternativeName>
    <alternativeName>
        <fullName evidence="1">t(6)A37 threonylcarbamoyladenosine biosynthesis protein TsaC</fullName>
    </alternativeName>
    <alternativeName>
        <fullName evidence="1">tRNA threonylcarbamoyladenosine biosynthesis protein TsaC</fullName>
    </alternativeName>
</protein>
<evidence type="ECO:0000255" key="1">
    <source>
        <dbReference type="HAMAP-Rule" id="MF_01852"/>
    </source>
</evidence>
<name>TSAC_NEIMB</name>
<gene>
    <name evidence="1" type="primary">tsaC</name>
    <name type="synonym">rimN</name>
    <name type="ordered locus">NMB2150</name>
</gene>
<proteinExistence type="inferred from homology"/>
<comment type="function">
    <text evidence="1">Required for the formation of a threonylcarbamoyl group on adenosine at position 37 (t(6)A37) in tRNAs that read codons beginning with adenine. Catalyzes the conversion of L-threonine, HCO(3)(-)/CO(2) and ATP to give threonylcarbamoyl-AMP (TC-AMP) as the acyladenylate intermediate, with the release of diphosphate.</text>
</comment>
<comment type="catalytic activity">
    <reaction evidence="1">
        <text>L-threonine + hydrogencarbonate + ATP = L-threonylcarbamoyladenylate + diphosphate + H2O</text>
        <dbReference type="Rhea" id="RHEA:36407"/>
        <dbReference type="ChEBI" id="CHEBI:15377"/>
        <dbReference type="ChEBI" id="CHEBI:17544"/>
        <dbReference type="ChEBI" id="CHEBI:30616"/>
        <dbReference type="ChEBI" id="CHEBI:33019"/>
        <dbReference type="ChEBI" id="CHEBI:57926"/>
        <dbReference type="ChEBI" id="CHEBI:73682"/>
        <dbReference type="EC" id="2.7.7.87"/>
    </reaction>
</comment>
<comment type="subcellular location">
    <subcellularLocation>
        <location evidence="1">Cytoplasm</location>
    </subcellularLocation>
</comment>
<comment type="similarity">
    <text evidence="1">Belongs to the SUA5 family. TsaC subfamily.</text>
</comment>
<feature type="chain" id="PRO_0000352939" description="Threonylcarbamoyl-AMP synthase">
    <location>
        <begin position="1"/>
        <end position="189"/>
    </location>
</feature>
<feature type="domain" description="YrdC-like" evidence="1">
    <location>
        <begin position="9"/>
        <end position="189"/>
    </location>
</feature>
<dbReference type="EC" id="2.7.7.87" evidence="1"/>
<dbReference type="EMBL" id="AE002098">
    <property type="protein sequence ID" value="AAF42458.1"/>
    <property type="molecule type" value="Genomic_DNA"/>
</dbReference>
<dbReference type="PIR" id="D81000">
    <property type="entry name" value="D81000"/>
</dbReference>
<dbReference type="RefSeq" id="NP_275135.1">
    <property type="nucleotide sequence ID" value="NC_003112.2"/>
</dbReference>
<dbReference type="SMR" id="Q9JXA4"/>
<dbReference type="FunCoup" id="Q9JXA4">
    <property type="interactions" value="269"/>
</dbReference>
<dbReference type="STRING" id="122586.NMB2150"/>
<dbReference type="PaxDb" id="122586-NMB2150"/>
<dbReference type="KEGG" id="nme:NMB2150"/>
<dbReference type="PATRIC" id="fig|122586.8.peg.2744"/>
<dbReference type="HOGENOM" id="CLU_031397_6_1_4"/>
<dbReference type="InParanoid" id="Q9JXA4"/>
<dbReference type="OrthoDB" id="9814580at2"/>
<dbReference type="Proteomes" id="UP000000425">
    <property type="component" value="Chromosome"/>
</dbReference>
<dbReference type="GO" id="GO:0005737">
    <property type="term" value="C:cytoplasm"/>
    <property type="evidence" value="ECO:0000318"/>
    <property type="project" value="GO_Central"/>
</dbReference>
<dbReference type="GO" id="GO:0005524">
    <property type="term" value="F:ATP binding"/>
    <property type="evidence" value="ECO:0007669"/>
    <property type="project" value="UniProtKB-UniRule"/>
</dbReference>
<dbReference type="GO" id="GO:0003725">
    <property type="term" value="F:double-stranded RNA binding"/>
    <property type="evidence" value="ECO:0007669"/>
    <property type="project" value="InterPro"/>
</dbReference>
<dbReference type="GO" id="GO:0061710">
    <property type="term" value="F:L-threonylcarbamoyladenylate synthase"/>
    <property type="evidence" value="ECO:0007669"/>
    <property type="project" value="UniProtKB-EC"/>
</dbReference>
<dbReference type="GO" id="GO:0016779">
    <property type="term" value="F:nucleotidyltransferase activity"/>
    <property type="evidence" value="ECO:0000318"/>
    <property type="project" value="GO_Central"/>
</dbReference>
<dbReference type="GO" id="GO:0000049">
    <property type="term" value="F:tRNA binding"/>
    <property type="evidence" value="ECO:0000318"/>
    <property type="project" value="GO_Central"/>
</dbReference>
<dbReference type="GO" id="GO:0006450">
    <property type="term" value="P:regulation of translational fidelity"/>
    <property type="evidence" value="ECO:0000318"/>
    <property type="project" value="GO_Central"/>
</dbReference>
<dbReference type="GO" id="GO:0002949">
    <property type="term" value="P:tRNA threonylcarbamoyladenosine modification"/>
    <property type="evidence" value="ECO:0007669"/>
    <property type="project" value="UniProtKB-UniRule"/>
</dbReference>
<dbReference type="FunFam" id="3.90.870.10:FF:000004">
    <property type="entry name" value="Threonylcarbamoyl-AMP synthase"/>
    <property type="match status" value="1"/>
</dbReference>
<dbReference type="Gene3D" id="3.90.870.10">
    <property type="entry name" value="DHBP synthase"/>
    <property type="match status" value="1"/>
</dbReference>
<dbReference type="HAMAP" id="MF_01852">
    <property type="entry name" value="TsaC"/>
    <property type="match status" value="1"/>
</dbReference>
<dbReference type="InterPro" id="IPR017945">
    <property type="entry name" value="DHBP_synth_RibB-like_a/b_dom"/>
</dbReference>
<dbReference type="InterPro" id="IPR006070">
    <property type="entry name" value="Sua5-like_dom"/>
</dbReference>
<dbReference type="InterPro" id="IPR023535">
    <property type="entry name" value="TC-AMP_synthase"/>
</dbReference>
<dbReference type="InterPro" id="IPR050156">
    <property type="entry name" value="TC-AMP_synthase_SUA5"/>
</dbReference>
<dbReference type="PANTHER" id="PTHR17490">
    <property type="entry name" value="SUA5"/>
    <property type="match status" value="1"/>
</dbReference>
<dbReference type="PANTHER" id="PTHR17490:SF18">
    <property type="entry name" value="THREONYLCARBAMOYL-AMP SYNTHASE"/>
    <property type="match status" value="1"/>
</dbReference>
<dbReference type="Pfam" id="PF01300">
    <property type="entry name" value="Sua5_yciO_yrdC"/>
    <property type="match status" value="1"/>
</dbReference>
<dbReference type="SUPFAM" id="SSF55821">
    <property type="entry name" value="YrdC/RibB"/>
    <property type="match status" value="1"/>
</dbReference>
<dbReference type="PROSITE" id="PS51163">
    <property type="entry name" value="YRDC"/>
    <property type="match status" value="1"/>
</dbReference>
<keyword id="KW-0067">ATP-binding</keyword>
<keyword id="KW-0963">Cytoplasm</keyword>
<keyword id="KW-0547">Nucleotide-binding</keyword>
<keyword id="KW-0548">Nucleotidyltransferase</keyword>
<keyword id="KW-1185">Reference proteome</keyword>
<keyword id="KW-0808">Transferase</keyword>
<keyword id="KW-0819">tRNA processing</keyword>
<sequence length="189" mass="21106">MLFPRIIAASAQRKLSVYLKKGGLVAYPTESCYGLGCLPTLAKALGKLAHLKKRPQHKGMIVIGNQFEQLQPLLQMPSENLQDMLRKEWPAPKTFLLSAKSCVLPELRGKQRSKLAVRVPAHVGARRLCQALQTPLVSTSCNRAGKRACRTEREVRRQFGRDVWIVGGRIGRQKSPSQIIDGETGKRLR</sequence>
<accession>Q9JXA4</accession>
<reference key="1">
    <citation type="journal article" date="2000" name="Science">
        <title>Complete genome sequence of Neisseria meningitidis serogroup B strain MC58.</title>
        <authorList>
            <person name="Tettelin H."/>
            <person name="Saunders N.J."/>
            <person name="Heidelberg J.F."/>
            <person name="Jeffries A.C."/>
            <person name="Nelson K.E."/>
            <person name="Eisen J.A."/>
            <person name="Ketchum K.A."/>
            <person name="Hood D.W."/>
            <person name="Peden J.F."/>
            <person name="Dodson R.J."/>
            <person name="Nelson W.C."/>
            <person name="Gwinn M.L."/>
            <person name="DeBoy R.T."/>
            <person name="Peterson J.D."/>
            <person name="Hickey E.K."/>
            <person name="Haft D.H."/>
            <person name="Salzberg S.L."/>
            <person name="White O."/>
            <person name="Fleischmann R.D."/>
            <person name="Dougherty B.A."/>
            <person name="Mason T.M."/>
            <person name="Ciecko A."/>
            <person name="Parksey D.S."/>
            <person name="Blair E."/>
            <person name="Cittone H."/>
            <person name="Clark E.B."/>
            <person name="Cotton M.D."/>
            <person name="Utterback T.R."/>
            <person name="Khouri H.M."/>
            <person name="Qin H."/>
            <person name="Vamathevan J.J."/>
            <person name="Gill J."/>
            <person name="Scarlato V."/>
            <person name="Masignani V."/>
            <person name="Pizza M."/>
            <person name="Grandi G."/>
            <person name="Sun L."/>
            <person name="Smith H.O."/>
            <person name="Fraser C.M."/>
            <person name="Moxon E.R."/>
            <person name="Rappuoli R."/>
            <person name="Venter J.C."/>
        </authorList>
    </citation>
    <scope>NUCLEOTIDE SEQUENCE [LARGE SCALE GENOMIC DNA]</scope>
    <source>
        <strain>ATCC BAA-335 / MC58</strain>
    </source>
</reference>